<accession>Q62656</accession>
<accession>Q62621</accession>
<protein>
    <recommendedName>
        <fullName>Receptor-type tyrosine-protein phosphatase zeta</fullName>
        <shortName>R-PTP-zeta</shortName>
        <ecNumber evidence="11">3.1.3.48</ecNumber>
    </recommendedName>
    <alternativeName>
        <fullName>3F8 chondroitin sulfate proteoglycan</fullName>
    </alternativeName>
    <alternativeName>
        <fullName>3H1 keratan sulfate proteoglycan</fullName>
    </alternativeName>
    <alternativeName>
        <fullName>Phosphacan</fullName>
    </alternativeName>
</protein>
<dbReference type="EC" id="3.1.3.48" evidence="11"/>
<dbReference type="EMBL" id="U09357">
    <property type="protein sequence ID" value="AAC52207.1"/>
    <property type="molecule type" value="mRNA"/>
</dbReference>
<dbReference type="EMBL" id="U04998">
    <property type="protein sequence ID" value="AAC52383.1"/>
    <property type="molecule type" value="mRNA"/>
</dbReference>
<dbReference type="PIR" id="A40169">
    <property type="entry name" value="A40169"/>
</dbReference>
<dbReference type="RefSeq" id="NP_001164156.1">
    <property type="nucleotide sequence ID" value="NM_001170685.1"/>
</dbReference>
<dbReference type="RefSeq" id="NP_037212.2">
    <property type="nucleotide sequence ID" value="NM_013080.2"/>
</dbReference>
<dbReference type="PDB" id="6J6U">
    <property type="method" value="X-ray"/>
    <property type="resolution" value="3.32 A"/>
    <property type="chains" value="A/B=1699-2316"/>
</dbReference>
<dbReference type="PDBsum" id="6J6U"/>
<dbReference type="SMR" id="Q62656"/>
<dbReference type="BioGRID" id="247642">
    <property type="interactions" value="12"/>
</dbReference>
<dbReference type="DIP" id="DIP-59715N"/>
<dbReference type="FunCoup" id="Q62656">
    <property type="interactions" value="1527"/>
</dbReference>
<dbReference type="IntAct" id="Q62656">
    <property type="interactions" value="1"/>
</dbReference>
<dbReference type="STRING" id="10116.ENSRNOP00000008719"/>
<dbReference type="GlyCosmos" id="Q62656">
    <property type="glycosylation" value="22 sites, No reported glycans"/>
</dbReference>
<dbReference type="GlyGen" id="Q62656">
    <property type="glycosylation" value="23 sites"/>
</dbReference>
<dbReference type="iPTMnet" id="Q62656"/>
<dbReference type="PhosphoSitePlus" id="Q62656"/>
<dbReference type="SwissPalm" id="Q62656"/>
<dbReference type="PaxDb" id="10116-ENSRNOP00000008719"/>
<dbReference type="GeneID" id="25613"/>
<dbReference type="KEGG" id="rno:25613"/>
<dbReference type="UCSC" id="RGD:3455">
    <molecule id="Q62656-1"/>
    <property type="organism name" value="rat"/>
</dbReference>
<dbReference type="AGR" id="RGD:3455"/>
<dbReference type="CTD" id="5803"/>
<dbReference type="RGD" id="3455">
    <property type="gene designation" value="Ptprz1"/>
</dbReference>
<dbReference type="eggNOG" id="KOG0789">
    <property type="taxonomic scope" value="Eukaryota"/>
</dbReference>
<dbReference type="InParanoid" id="Q62656"/>
<dbReference type="OrthoDB" id="39619at9989"/>
<dbReference type="PhylomeDB" id="Q62656"/>
<dbReference type="Reactome" id="R-RNO-449836">
    <property type="pathway name" value="Other interleukin signaling"/>
</dbReference>
<dbReference type="Reactome" id="R-RNO-9851151">
    <property type="pathway name" value="MDK and PTN in ALK signaling"/>
</dbReference>
<dbReference type="PRO" id="PR:Q62656"/>
<dbReference type="Proteomes" id="UP000002494">
    <property type="component" value="Unplaced"/>
</dbReference>
<dbReference type="GO" id="GO:0030424">
    <property type="term" value="C:axon"/>
    <property type="evidence" value="ECO:0000314"/>
    <property type="project" value="RGD"/>
</dbReference>
<dbReference type="GO" id="GO:0030425">
    <property type="term" value="C:dendrite"/>
    <property type="evidence" value="ECO:0000314"/>
    <property type="project" value="RGD"/>
</dbReference>
<dbReference type="GO" id="GO:0043197">
    <property type="term" value="C:dendritic spine"/>
    <property type="evidence" value="ECO:0000314"/>
    <property type="project" value="RGD"/>
</dbReference>
<dbReference type="GO" id="GO:0031012">
    <property type="term" value="C:extracellular matrix"/>
    <property type="evidence" value="ECO:0000266"/>
    <property type="project" value="RGD"/>
</dbReference>
<dbReference type="GO" id="GO:0005615">
    <property type="term" value="C:extracellular space"/>
    <property type="evidence" value="ECO:0000314"/>
    <property type="project" value="RGD"/>
</dbReference>
<dbReference type="GO" id="GO:0030175">
    <property type="term" value="C:filopodium"/>
    <property type="evidence" value="ECO:0000314"/>
    <property type="project" value="RGD"/>
</dbReference>
<dbReference type="GO" id="GO:0098978">
    <property type="term" value="C:glutamatergic synapse"/>
    <property type="evidence" value="ECO:0000314"/>
    <property type="project" value="SynGO"/>
</dbReference>
<dbReference type="GO" id="GO:0030426">
    <property type="term" value="C:growth cone"/>
    <property type="evidence" value="ECO:0000314"/>
    <property type="project" value="RGD"/>
</dbReference>
<dbReference type="GO" id="GO:0030027">
    <property type="term" value="C:lamellipodium"/>
    <property type="evidence" value="ECO:0000314"/>
    <property type="project" value="RGD"/>
</dbReference>
<dbReference type="GO" id="GO:0043025">
    <property type="term" value="C:neuronal cell body"/>
    <property type="evidence" value="ECO:0000314"/>
    <property type="project" value="RGD"/>
</dbReference>
<dbReference type="GO" id="GO:0072534">
    <property type="term" value="C:perineuronal net"/>
    <property type="evidence" value="ECO:0000314"/>
    <property type="project" value="RGD"/>
</dbReference>
<dbReference type="GO" id="GO:0005886">
    <property type="term" value="C:plasma membrane"/>
    <property type="evidence" value="ECO:0000314"/>
    <property type="project" value="UniProtKB"/>
</dbReference>
<dbReference type="GO" id="GO:0098839">
    <property type="term" value="C:postsynaptic density membrane"/>
    <property type="evidence" value="ECO:0000314"/>
    <property type="project" value="SynGO"/>
</dbReference>
<dbReference type="GO" id="GO:0045211">
    <property type="term" value="C:postsynaptic membrane"/>
    <property type="evidence" value="ECO:0000314"/>
    <property type="project" value="RGD"/>
</dbReference>
<dbReference type="GO" id="GO:0032587">
    <property type="term" value="C:ruffle membrane"/>
    <property type="evidence" value="ECO:0000314"/>
    <property type="project" value="RGD"/>
</dbReference>
<dbReference type="GO" id="GO:0045202">
    <property type="term" value="C:synapse"/>
    <property type="evidence" value="ECO:0000266"/>
    <property type="project" value="RGD"/>
</dbReference>
<dbReference type="GO" id="GO:0017134">
    <property type="term" value="F:fibroblast growth factor binding"/>
    <property type="evidence" value="ECO:0000353"/>
    <property type="project" value="RGD"/>
</dbReference>
<dbReference type="GO" id="GO:0005178">
    <property type="term" value="F:integrin binding"/>
    <property type="evidence" value="ECO:0000250"/>
    <property type="project" value="UniProtKB"/>
</dbReference>
<dbReference type="GO" id="GO:0016791">
    <property type="term" value="F:phosphatase activity"/>
    <property type="evidence" value="ECO:0000314"/>
    <property type="project" value="RGD"/>
</dbReference>
<dbReference type="GO" id="GO:0004725">
    <property type="term" value="F:protein tyrosine phosphatase activity"/>
    <property type="evidence" value="ECO:0000314"/>
    <property type="project" value="UniProtKB"/>
</dbReference>
<dbReference type="GO" id="GO:0007413">
    <property type="term" value="P:axonal fasciculation"/>
    <property type="evidence" value="ECO:0000314"/>
    <property type="project" value="RGD"/>
</dbReference>
<dbReference type="GO" id="GO:0007409">
    <property type="term" value="P:axonogenesis"/>
    <property type="evidence" value="ECO:0000266"/>
    <property type="project" value="RGD"/>
</dbReference>
<dbReference type="GO" id="GO:0002244">
    <property type="term" value="P:hematopoietic progenitor cell differentiation"/>
    <property type="evidence" value="ECO:0000266"/>
    <property type="project" value="RGD"/>
</dbReference>
<dbReference type="GO" id="GO:0021766">
    <property type="term" value="P:hippocampus development"/>
    <property type="evidence" value="ECO:0000270"/>
    <property type="project" value="RGD"/>
</dbReference>
<dbReference type="GO" id="GO:0007611">
    <property type="term" value="P:learning or memory"/>
    <property type="evidence" value="ECO:0000250"/>
    <property type="project" value="UniProtKB"/>
</dbReference>
<dbReference type="GO" id="GO:0008285">
    <property type="term" value="P:negative regulation of cell population proliferation"/>
    <property type="evidence" value="ECO:0000315"/>
    <property type="project" value="RGD"/>
</dbReference>
<dbReference type="GO" id="GO:0010812">
    <property type="term" value="P:negative regulation of cell-substrate adhesion"/>
    <property type="evidence" value="ECO:0000314"/>
    <property type="project" value="RGD"/>
</dbReference>
<dbReference type="GO" id="GO:2000171">
    <property type="term" value="P:negative regulation of dendrite development"/>
    <property type="evidence" value="ECO:0000314"/>
    <property type="project" value="RGD"/>
</dbReference>
<dbReference type="GO" id="GO:0043524">
    <property type="term" value="P:negative regulation of neuron apoptotic process"/>
    <property type="evidence" value="ECO:0000250"/>
    <property type="project" value="UniProtKB"/>
</dbReference>
<dbReference type="GO" id="GO:0048666">
    <property type="term" value="P:neuron development"/>
    <property type="evidence" value="ECO:0000270"/>
    <property type="project" value="RGD"/>
</dbReference>
<dbReference type="GO" id="GO:0031175">
    <property type="term" value="P:neuron projection development"/>
    <property type="evidence" value="ECO:0000318"/>
    <property type="project" value="GO_Central"/>
</dbReference>
<dbReference type="GO" id="GO:0048709">
    <property type="term" value="P:oligodendrocyte differentiation"/>
    <property type="evidence" value="ECO:0000270"/>
    <property type="project" value="RGD"/>
</dbReference>
<dbReference type="GO" id="GO:0035335">
    <property type="term" value="P:peptidyl-tyrosine dephosphorylation"/>
    <property type="evidence" value="ECO:0000314"/>
    <property type="project" value="UniProtKB"/>
</dbReference>
<dbReference type="GO" id="GO:0030335">
    <property type="term" value="P:positive regulation of cell migration"/>
    <property type="evidence" value="ECO:0000314"/>
    <property type="project" value="RGD"/>
</dbReference>
<dbReference type="GO" id="GO:1900006">
    <property type="term" value="P:positive regulation of dendrite development"/>
    <property type="evidence" value="ECO:0000314"/>
    <property type="project" value="RGD"/>
</dbReference>
<dbReference type="GO" id="GO:0048146">
    <property type="term" value="P:positive regulation of fibroblast proliferation"/>
    <property type="evidence" value="ECO:0000314"/>
    <property type="project" value="RGD"/>
</dbReference>
<dbReference type="GO" id="GO:2001224">
    <property type="term" value="P:positive regulation of neuron migration"/>
    <property type="evidence" value="ECO:0000315"/>
    <property type="project" value="RGD"/>
</dbReference>
<dbReference type="GO" id="GO:0010976">
    <property type="term" value="P:positive regulation of neuron projection development"/>
    <property type="evidence" value="ECO:0000315"/>
    <property type="project" value="RGD"/>
</dbReference>
<dbReference type="GO" id="GO:0048714">
    <property type="term" value="P:positive regulation of oligodendrocyte differentiation"/>
    <property type="evidence" value="ECO:0000315"/>
    <property type="project" value="UniProtKB"/>
</dbReference>
<dbReference type="GO" id="GO:1900149">
    <property type="term" value="P:positive regulation of Schwann cell migration"/>
    <property type="evidence" value="ECO:0000315"/>
    <property type="project" value="RGD"/>
</dbReference>
<dbReference type="GO" id="GO:0048814">
    <property type="term" value="P:regulation of dendrite morphogenesis"/>
    <property type="evidence" value="ECO:0000315"/>
    <property type="project" value="RGD"/>
</dbReference>
<dbReference type="GO" id="GO:0031641">
    <property type="term" value="P:regulation of myelination"/>
    <property type="evidence" value="ECO:0000250"/>
    <property type="project" value="UniProtKB"/>
</dbReference>
<dbReference type="GO" id="GO:0070445">
    <property type="term" value="P:regulation of oligodendrocyte progenitor proliferation"/>
    <property type="evidence" value="ECO:0000250"/>
    <property type="project" value="UniProtKB"/>
</dbReference>
<dbReference type="GO" id="GO:0007165">
    <property type="term" value="P:signal transduction"/>
    <property type="evidence" value="ECO:0000318"/>
    <property type="project" value="GO_Central"/>
</dbReference>
<dbReference type="GO" id="GO:0008542">
    <property type="term" value="P:visual learning"/>
    <property type="evidence" value="ECO:0000270"/>
    <property type="project" value="RGD"/>
</dbReference>
<dbReference type="CDD" id="cd03122">
    <property type="entry name" value="alpha_CARP_receptor_like"/>
    <property type="match status" value="1"/>
</dbReference>
<dbReference type="CDD" id="cd00063">
    <property type="entry name" value="FN3"/>
    <property type="match status" value="1"/>
</dbReference>
<dbReference type="CDD" id="cd17669">
    <property type="entry name" value="R-PTP-Z-2"/>
    <property type="match status" value="1"/>
</dbReference>
<dbReference type="FunFam" id="3.90.190.10:FF:000016">
    <property type="entry name" value="receptor-type tyrosine-protein phosphatase gamma isoform X1"/>
    <property type="match status" value="1"/>
</dbReference>
<dbReference type="FunFam" id="2.60.40.10:FF:000313">
    <property type="entry name" value="Receptor-type tyrosine-protein phosphatase zeta"/>
    <property type="match status" value="1"/>
</dbReference>
<dbReference type="FunFam" id="3.10.200.10:FF:000004">
    <property type="entry name" value="receptor-type tyrosine-protein phosphatase zeta isoform X1"/>
    <property type="match status" value="1"/>
</dbReference>
<dbReference type="FunFam" id="3.90.190.10:FF:000013">
    <property type="entry name" value="receptor-type tyrosine-protein phosphatase zeta isoform X1"/>
    <property type="match status" value="1"/>
</dbReference>
<dbReference type="Gene3D" id="3.10.200.10">
    <property type="entry name" value="Alpha carbonic anhydrase"/>
    <property type="match status" value="1"/>
</dbReference>
<dbReference type="Gene3D" id="2.60.40.10">
    <property type="entry name" value="Immunoglobulins"/>
    <property type="match status" value="1"/>
</dbReference>
<dbReference type="Gene3D" id="3.90.190.10">
    <property type="entry name" value="Protein tyrosine phosphatase superfamily"/>
    <property type="match status" value="2"/>
</dbReference>
<dbReference type="InterPro" id="IPR041887">
    <property type="entry name" value="Alpha_CARP_receptor-type"/>
</dbReference>
<dbReference type="InterPro" id="IPR001148">
    <property type="entry name" value="CA_dom"/>
</dbReference>
<dbReference type="InterPro" id="IPR036398">
    <property type="entry name" value="CA_dom_sf"/>
</dbReference>
<dbReference type="InterPro" id="IPR003961">
    <property type="entry name" value="FN3_dom"/>
</dbReference>
<dbReference type="InterPro" id="IPR036116">
    <property type="entry name" value="FN3_sf"/>
</dbReference>
<dbReference type="InterPro" id="IPR013783">
    <property type="entry name" value="Ig-like_fold"/>
</dbReference>
<dbReference type="InterPro" id="IPR029021">
    <property type="entry name" value="Prot-tyrosine_phosphatase-like"/>
</dbReference>
<dbReference type="InterPro" id="IPR050348">
    <property type="entry name" value="Protein-Tyr_Phosphatase"/>
</dbReference>
<dbReference type="InterPro" id="IPR000242">
    <property type="entry name" value="PTP_cat"/>
</dbReference>
<dbReference type="InterPro" id="IPR016130">
    <property type="entry name" value="Tyr_Pase_AS"/>
</dbReference>
<dbReference type="InterPro" id="IPR003595">
    <property type="entry name" value="Tyr_Pase_cat"/>
</dbReference>
<dbReference type="InterPro" id="IPR000387">
    <property type="entry name" value="Tyr_Pase_dom"/>
</dbReference>
<dbReference type="PANTHER" id="PTHR19134">
    <property type="entry name" value="RECEPTOR-TYPE TYROSINE-PROTEIN PHOSPHATASE"/>
    <property type="match status" value="1"/>
</dbReference>
<dbReference type="PANTHER" id="PTHR19134:SF461">
    <property type="entry name" value="RECEPTOR-TYPE TYROSINE-PROTEIN PHOSPHATASE ZETA"/>
    <property type="match status" value="1"/>
</dbReference>
<dbReference type="Pfam" id="PF00194">
    <property type="entry name" value="Carb_anhydrase"/>
    <property type="match status" value="1"/>
</dbReference>
<dbReference type="Pfam" id="PF00041">
    <property type="entry name" value="fn3"/>
    <property type="match status" value="1"/>
</dbReference>
<dbReference type="Pfam" id="PF00102">
    <property type="entry name" value="Y_phosphatase"/>
    <property type="match status" value="2"/>
</dbReference>
<dbReference type="PRINTS" id="PR00700">
    <property type="entry name" value="PRTYPHPHTASE"/>
</dbReference>
<dbReference type="SMART" id="SM01057">
    <property type="entry name" value="Carb_anhydrase"/>
    <property type="match status" value="1"/>
</dbReference>
<dbReference type="SMART" id="SM00060">
    <property type="entry name" value="FN3"/>
    <property type="match status" value="1"/>
</dbReference>
<dbReference type="SMART" id="SM00194">
    <property type="entry name" value="PTPc"/>
    <property type="match status" value="2"/>
</dbReference>
<dbReference type="SMART" id="SM00404">
    <property type="entry name" value="PTPc_motif"/>
    <property type="match status" value="2"/>
</dbReference>
<dbReference type="SUPFAM" id="SSF52799">
    <property type="entry name" value="(Phosphotyrosine protein) phosphatases II"/>
    <property type="match status" value="2"/>
</dbReference>
<dbReference type="SUPFAM" id="SSF51069">
    <property type="entry name" value="Carbonic anhydrase"/>
    <property type="match status" value="1"/>
</dbReference>
<dbReference type="SUPFAM" id="SSF49265">
    <property type="entry name" value="Fibronectin type III"/>
    <property type="match status" value="1"/>
</dbReference>
<dbReference type="PROSITE" id="PS51144">
    <property type="entry name" value="ALPHA_CA_2"/>
    <property type="match status" value="1"/>
</dbReference>
<dbReference type="PROSITE" id="PS50853">
    <property type="entry name" value="FN3"/>
    <property type="match status" value="1"/>
</dbReference>
<dbReference type="PROSITE" id="PS00383">
    <property type="entry name" value="TYR_PHOSPHATASE_1"/>
    <property type="match status" value="1"/>
</dbReference>
<dbReference type="PROSITE" id="PS50056">
    <property type="entry name" value="TYR_PHOSPHATASE_2"/>
    <property type="match status" value="2"/>
</dbReference>
<dbReference type="PROSITE" id="PS50055">
    <property type="entry name" value="TYR_PHOSPHATASE_PTP"/>
    <property type="match status" value="2"/>
</dbReference>
<reference key="1">
    <citation type="journal article" date="1995" name="DNA Seq.">
        <title>Nucleotide sequence and molecular variants of rat receptor-type protein tyrosine phosphatase-zeta/beta.</title>
        <authorList>
            <person name="Maurel P."/>
            <person name="Meyer-Puttlitz B."/>
            <person name="Flad M."/>
            <person name="Margolis R.U."/>
            <person name="Margolis R.K."/>
        </authorList>
    </citation>
    <scope>NUCLEOTIDE SEQUENCE [MRNA] (ISOFORMS 1 AND 2)</scope>
    <source>
        <strain>Sprague-Dawley</strain>
        <tissue>Brain</tissue>
    </source>
</reference>
<reference key="2">
    <citation type="journal article" date="1994" name="Proc. Natl. Acad. Sci. U.S.A.">
        <title>Phosphacan, a chondroitin sulfate proteoglycan of brain that interacts with neurons and neural cell-adhesion molecules, is an extracellular variant of a receptor-type protein tyrosine phosphatase.</title>
        <authorList>
            <person name="Maurel P."/>
            <person name="Rauch U."/>
            <person name="Flad M."/>
            <person name="Margolis R.K."/>
            <person name="Margolis R.U."/>
        </authorList>
    </citation>
    <scope>NUCLEOTIDE SEQUENCE [MRNA] (ISOFORM 3)</scope>
    <scope>PARTIAL PROTEIN SEQUENCE</scope>
    <source>
        <strain>Sprague-Dawley</strain>
        <tissue>Brain</tissue>
    </source>
</reference>
<reference key="3">
    <citation type="journal article" date="1994" name="J. Cell Biol.">
        <title>Interactions of the chondroitin sulfate proteoglycan phosphacan, the extracellular domain of a receptor-type protein tyrosine phosphatase, with neurons, glia, and neural cell adhesion molecules.</title>
        <authorList>
            <person name="Milev P."/>
            <person name="Friedlander D.R."/>
            <person name="Sakurai T."/>
            <person name="Karthikeyan L."/>
            <person name="Flad M."/>
            <person name="Margolis R.K."/>
            <person name="Grumet M."/>
            <person name="Margolis R.U."/>
        </authorList>
    </citation>
    <scope>INTERACTION WITH N-CAM AND NG-CAM</scope>
</reference>
<reference key="4">
    <citation type="journal article" date="1994" name="J. Biol. Chem.">
        <title>Interactions with tenascin and differential effects on cell adhesion of neurocan and phosphacan, two major chondroitin sulfate proteoglycans of nervous tissue.</title>
        <authorList>
            <person name="Grumet M."/>
            <person name="Milev P."/>
            <person name="Sakurai T."/>
            <person name="Karthikeyan L."/>
            <person name="Bourdon M."/>
            <person name="Margolis R.K."/>
            <person name="Margolis R.U."/>
        </authorList>
    </citation>
    <scope>INTERACTION WITH TENASCIN</scope>
</reference>
<reference key="5">
    <citation type="journal article" date="1995" name="Cell">
        <title>The carbonic anhydrase domain of receptor tyrosine phosphatase beta is a functional ligand for the axonal cell recognition molecule contactin.</title>
        <authorList>
            <person name="Peles E."/>
            <person name="Nativ M."/>
            <person name="Campbell P.L."/>
            <person name="Sakurai T."/>
            <person name="Martinez R."/>
            <person name="Lev S."/>
            <person name="Clary D.O."/>
            <person name="Schilling J."/>
            <person name="Barnea G."/>
            <person name="Plowman G.D."/>
            <person name="Grumet M."/>
            <person name="Schlessinger J."/>
        </authorList>
    </citation>
    <scope>INTERACTION WITH CONTACTIN</scope>
</reference>
<reference key="6">
    <citation type="journal article" date="1999" name="J. Biol. Chem.">
        <title>A receptor-like protein-tyrosine phosphatase PTPzeta/RPTPbeta binds a heparin-binding growth factor midkine. Involvement of arginine 78 of midkine in the high affinity binding to PTPzeta.</title>
        <authorList>
            <person name="Maeda N."/>
            <person name="Ichihara-Tanaka K."/>
            <person name="Kimura T."/>
            <person name="Kadomatsu K."/>
            <person name="Muramatsu T."/>
            <person name="Noda M."/>
        </authorList>
    </citation>
    <scope>INTERACTION WITH MDK</scope>
</reference>
<reference key="7">
    <citation type="journal article" date="2006" name="FEBS Lett.">
        <title>Protein tyrosine phosphatase receptor type Z is inactivated by ligand-induced oligomerization.</title>
        <authorList>
            <person name="Fukada M."/>
            <person name="Fujikawa A."/>
            <person name="Chow J.P."/>
            <person name="Ikematsu S."/>
            <person name="Sakuma S."/>
            <person name="Noda M."/>
        </authorList>
    </citation>
    <scope>CATALYTIC ACTIVITY</scope>
    <scope>SUBCELLULAR LOCATION</scope>
    <scope>SUBUNIT</scope>
    <scope>INTERACTION WITH PTN</scope>
</reference>
<reference key="8">
    <citation type="journal article" date="2012" name="Nat. Commun.">
        <title>Quantitative maps of protein phosphorylation sites across 14 different rat organs and tissues.</title>
        <authorList>
            <person name="Lundby A."/>
            <person name="Secher A."/>
            <person name="Lage K."/>
            <person name="Nordsborg N.B."/>
            <person name="Dmytriyev A."/>
            <person name="Lundby C."/>
            <person name="Olsen J.V."/>
        </authorList>
    </citation>
    <scope>PHOSPHORYLATION [LARGE SCALE ANALYSIS] AT SER-572; SER-576; SER-645; SER-647 AND THR-1688</scope>
    <scope>IDENTIFICATION BY MASS SPECTROMETRY [LARGE SCALE ANALYSIS]</scope>
</reference>
<sequence length="2316" mass="255342">MRILQSFLACVQLLCVCRLDWAYGYYRQQRKLVEEIGWSYTGALNQKNWGKKYPICNSPKQSPINIDEDLTQVNVNLKKLKFQGWEKPSLENTFIHNTGKTVEINLTNDYYLSGGLSEKVFKASKMTFHWGKCNVSSEGSEHSLEGQKFPLEMQIYCFDADRFSSFEETVKGKGRLRALSILFEIGVEENLDYKAIIDGTESVSRFGKQAALDPFILQNLLPNSTDKYYIYNGSLTSPPCTDTVEWIVFKDTVSISESQLAVFCEVLTMQQSGYVMLMDYLQNNFREQQYKFSRQVFSSYTGKEEIHEAVCSSEPENVQADPENYTSLLITWERPRVVYDTMIEKFAVLYQPLEGNDQTKHEFLTDGYQDLGAILNNLIPNMSYVLQIVAICSNGLYGKYSDQLIVDMPTEDAELDLFPELIGTEEIIKEENYGKGNEEDTGLNPGRDSATNQIRKKEPQVSTTTHYNHMGTKYNEAKTNRSPTRGSEFSGKSDVLNTSLNPTSQQVAEFNPEREMSLPSQIGTNLPPHSVEGTSASLNSGSKTLLVFPQMNLSGTAESLNMVSITEYKEVSADLSEEENLLTDFKLDSGADDSSGSSPASSTVPFSTDNLSHGYTSSSDTPEAVTYDVLRPESTRNALEDSAPSGSEESLKDPSLEGSVWFPGSTDLTTQSETGSGREGFLQVNSTDFQVDESRETTETFSPDATASRGPSVTDMEMPHYSTFAYPPTEVTSHAFTPSSRPLDLAPTSNILHSQTTQPVYNGETPLQPSYSSEVFPLVTPLLLDNQTLNTTPAASSSDSALHATPVFPSVGVSFDSILSSYDDAPLLPFSSASFSSDLFHHLHTVSQTLPQVTSAAERDELSLHASLLVAGGDLLLEPSLVQYSDVMSHQVTIHAASDTLEFGSESAVLYKTSMVSQIESPSSDVVMHAYSSGPETSYAIEGSHHVLTVSSSSAIPVHDSVGVADQGSLLINPSHISLPESSFITPTASLLQLPPALSGDGEWSGASSDSELLLPDTDGLRTLNMSSPVSVADFTYTTSVSGDDIKPLSKGEMMYGNETELKMSSFSDMAYPSKSTVVPKMSDIVNKWSESLKETSVSVSSINSVFTESLVYPITKVFDQEISRVPEIIFPVKPTHTASQASGDTWLKPGLSTNSEPALSDTASSEVSHPSTQPLLYEAASPFNTEALLQPSFPASDVDTLLKTALPSGPRDPVLTETPMVEQSSSSVSLPLASESASSKSTLHFTSVPVLNMSPSDVHPTSLQRLTVPHSREEYFEQGLLKSKSPQQVLPSLHSHDEFFQTAHLDISQAYPPKGRHAFATPILSINEPQNTLINRLVYSEDIFMHPEISITDKALTGLPTTVSDVLIATDHSVPLGSGPISMTTVSPNRDDSVTTTKLLLPSKATSKPTHSARSDADLVGGGEDGDDYDDDDYDDIDSDRFPVNKCMSCSPYRESQEKVMNDSDTQESSLVDQSDPISHLLSENTEEENGGTGVTRVDKSPDKSPPPSMLPQKHNDGREDRDIQMGSAVLPHTPGSKAWAVLTSDEESGSGQGTSDSLNDNETSTDFSFPDVNEKDADGVLEADDTGIAPGSPRSSTPSVTSGHSGVSNSSEAEASNSSHESRIGLAEGLESEKKAVIPLVIVSALTFICLVVLVGILIYWRKCFQTAHFYLEDNTSPRVISTPPTPIFPISDDIGAIPIKHFPKHVADLHASNGFTEEFETLKEFYQEVQSCTVDLGITADSSNHPDNKHKNRYVNIVAYDHSRVKLTQLAEKDGKLTDYINANYVDGYNRPKAYIAAQGPLKSTAEDFWRMIWEHNVEVIVMITNLVEKGRRKCDQYWPTDGSEEYGSFLVNQKNVQVLAYYTVRNFTLRNTKIKKGSQKGRSSGRLVTQYHYTQWPDMGVPEYSLPVLAFVRKTAQAKRHAVGPVVVHCSAGVGRTGTYIVLDSMLQQIQHEGTVNIFGFLKHIRSQRNYLVQTEEQYVFIHDTLVEAILSKETEVPDSHIHSYVNTLLIPGPSGKTKLEKQFQLLSQSNILQSDYSTALKQCNREKNRTSSIIPVERSRVGISSLSGEGTDYINASYIMGYYQSNEFIITQHPLLHTIKDFWRMIWDHNAQLVVMIPDGQNMAEDEFVYWPNKDEPINCESFKVTLMSEEHKCLSNEEKLIVQDFILEATQDDYVLEVRHFQCPKWPNPDSPISKTFELISIIKEEAANRDGPMIVHDEHGGVTAGTFCALTTLMHQLEKENSMDVYQVAKMINLMRPGVFTDIEQYQFLYKVVLSLVSTRQEENPSTSLDSNGAALPDGNIAESLESLV</sequence>
<proteinExistence type="evidence at protein level"/>
<gene>
    <name type="primary">Ptprz1</name>
    <name type="synonym">Ptprz</name>
    <name type="synonym">Ptpz</name>
</gene>
<keyword id="KW-0002">3D-structure</keyword>
<keyword id="KW-0025">Alternative splicing</keyword>
<keyword id="KW-1003">Cell membrane</keyword>
<keyword id="KW-0903">Direct protein sequencing</keyword>
<keyword id="KW-1015">Disulfide bond</keyword>
<keyword id="KW-0325">Glycoprotein</keyword>
<keyword id="KW-0378">Hydrolase</keyword>
<keyword id="KW-0472">Membrane</keyword>
<keyword id="KW-0597">Phosphoprotein</keyword>
<keyword id="KW-0904">Protein phosphatase</keyword>
<keyword id="KW-0654">Proteoglycan</keyword>
<keyword id="KW-1185">Reference proteome</keyword>
<keyword id="KW-0677">Repeat</keyword>
<keyword id="KW-0964">Secreted</keyword>
<keyword id="KW-0732">Signal</keyword>
<keyword id="KW-0812">Transmembrane</keyword>
<keyword id="KW-1133">Transmembrane helix</keyword>
<feature type="signal peptide">
    <location>
        <begin position="1"/>
        <end position="24"/>
    </location>
</feature>
<feature type="chain" id="PRO_0000025469" description="Receptor-type tyrosine-protein phosphatase zeta">
    <location>
        <begin position="25"/>
        <end position="2316"/>
    </location>
</feature>
<feature type="topological domain" description="Extracellular" evidence="4">
    <location>
        <begin position="25"/>
        <end position="1637"/>
    </location>
</feature>
<feature type="transmembrane region" description="Helical" evidence="4">
    <location>
        <begin position="1638"/>
        <end position="1663"/>
    </location>
</feature>
<feature type="topological domain" description="Cytoplasmic" evidence="4">
    <location>
        <begin position="1664"/>
        <end position="2316"/>
    </location>
</feature>
<feature type="domain" description="Alpha-carbonic anhydrase" evidence="7">
    <location>
        <begin position="36"/>
        <end position="300"/>
    </location>
</feature>
<feature type="domain" description="Fibronectin type-III" evidence="6">
    <location>
        <begin position="314"/>
        <end position="413"/>
    </location>
</feature>
<feature type="domain" description="Tyrosine-protein phosphatase 1" evidence="5">
    <location>
        <begin position="1718"/>
        <end position="1993"/>
    </location>
</feature>
<feature type="domain" description="Tyrosine-protein phosphatase 2" evidence="5">
    <location>
        <begin position="2024"/>
        <end position="2283"/>
    </location>
</feature>
<feature type="region of interest" description="Disordered" evidence="9">
    <location>
        <begin position="433"/>
        <end position="499"/>
    </location>
</feature>
<feature type="region of interest" description="Disordered" evidence="9">
    <location>
        <begin position="518"/>
        <end position="537"/>
    </location>
</feature>
<feature type="region of interest" description="Disordered" evidence="9">
    <location>
        <begin position="586"/>
        <end position="624"/>
    </location>
</feature>
<feature type="region of interest" description="Disordered" evidence="9">
    <location>
        <begin position="636"/>
        <end position="720"/>
    </location>
</feature>
<feature type="region of interest" description="Disordered" evidence="9">
    <location>
        <begin position="1141"/>
        <end position="1172"/>
    </location>
</feature>
<feature type="region of interest" description="Disordered" evidence="9">
    <location>
        <begin position="1204"/>
        <end position="1228"/>
    </location>
</feature>
<feature type="region of interest" description="Disordered" evidence="9">
    <location>
        <begin position="1401"/>
        <end position="1521"/>
    </location>
</feature>
<feature type="region of interest" description="Disordered" evidence="9">
    <location>
        <begin position="1545"/>
        <end position="1622"/>
    </location>
</feature>
<feature type="compositionally biased region" description="Low complexity" evidence="9">
    <location>
        <begin position="592"/>
        <end position="602"/>
    </location>
</feature>
<feature type="compositionally biased region" description="Polar residues" evidence="9">
    <location>
        <begin position="603"/>
        <end position="621"/>
    </location>
</feature>
<feature type="compositionally biased region" description="Polar residues" evidence="9">
    <location>
        <begin position="666"/>
        <end position="675"/>
    </location>
</feature>
<feature type="compositionally biased region" description="Polar residues" evidence="9">
    <location>
        <begin position="699"/>
        <end position="711"/>
    </location>
</feature>
<feature type="compositionally biased region" description="Polar residues" evidence="9">
    <location>
        <begin position="1152"/>
        <end position="1172"/>
    </location>
</feature>
<feature type="compositionally biased region" description="Polar residues" evidence="9">
    <location>
        <begin position="1401"/>
        <end position="1413"/>
    </location>
</feature>
<feature type="compositionally biased region" description="Acidic residues" evidence="9">
    <location>
        <begin position="1425"/>
        <end position="1439"/>
    </location>
</feature>
<feature type="compositionally biased region" description="Polar residues" evidence="9">
    <location>
        <begin position="1464"/>
        <end position="1478"/>
    </location>
</feature>
<feature type="compositionally biased region" description="Polar residues" evidence="9">
    <location>
        <begin position="1555"/>
        <end position="1569"/>
    </location>
</feature>
<feature type="compositionally biased region" description="Polar residues" evidence="9">
    <location>
        <begin position="1595"/>
        <end position="1609"/>
    </location>
</feature>
<feature type="compositionally biased region" description="Low complexity" evidence="9">
    <location>
        <begin position="1610"/>
        <end position="1621"/>
    </location>
</feature>
<feature type="active site" description="Phosphocysteine intermediate" evidence="5 8">
    <location>
        <position position="1934"/>
    </location>
</feature>
<feature type="binding site" evidence="1">
    <location>
        <position position="1902"/>
    </location>
    <ligand>
        <name>substrate</name>
    </ligand>
</feature>
<feature type="binding site" evidence="1">
    <location>
        <begin position="1934"/>
        <end position="1940"/>
    </location>
    <ligand>
        <name>substrate</name>
    </ligand>
</feature>
<feature type="binding site" evidence="1">
    <location>
        <position position="1978"/>
    </location>
    <ligand>
        <name>substrate</name>
    </ligand>
</feature>
<feature type="site" description="Ancestral active site">
    <location>
        <position position="2224"/>
    </location>
</feature>
<feature type="modified residue" description="Phosphoserine" evidence="18">
    <location>
        <position position="572"/>
    </location>
</feature>
<feature type="modified residue" description="Phosphoserine" evidence="18">
    <location>
        <position position="576"/>
    </location>
</feature>
<feature type="modified residue" description="Phosphoserine; alternate" evidence="18">
    <location>
        <position position="645"/>
    </location>
</feature>
<feature type="modified residue" description="Phosphoserine" evidence="18">
    <location>
        <position position="647"/>
    </location>
</feature>
<feature type="modified residue" description="Phosphothreonine" evidence="2">
    <location>
        <position position="1685"/>
    </location>
</feature>
<feature type="modified residue" description="Phosphothreonine" evidence="18">
    <location>
        <position position="1688"/>
    </location>
</feature>
<feature type="modified residue" description="Phosphoserine" evidence="3">
    <location>
        <position position="2056"/>
    </location>
</feature>
<feature type="glycosylation site" description="N-linked (GlcNAc...) asparagine" evidence="4">
    <location>
        <position position="105"/>
    </location>
</feature>
<feature type="glycosylation site" description="N-linked (GlcNAc...) asparagine" evidence="4">
    <location>
        <position position="134"/>
    </location>
</feature>
<feature type="glycosylation site" description="N-linked (GlcNAc...) asparagine" evidence="4">
    <location>
        <position position="223"/>
    </location>
</feature>
<feature type="glycosylation site" description="N-linked (GlcNAc...) asparagine" evidence="4">
    <location>
        <position position="232"/>
    </location>
</feature>
<feature type="glycosylation site" description="N-linked (GlcNAc...) asparagine" evidence="4">
    <location>
        <position position="324"/>
    </location>
</feature>
<feature type="glycosylation site" description="N-linked (GlcNAc...) asparagine" evidence="4">
    <location>
        <position position="381"/>
    </location>
</feature>
<feature type="glycosylation site" description="N-linked (GlcNAc...) asparagine" evidence="4">
    <location>
        <position position="497"/>
    </location>
</feature>
<feature type="glycosylation site" description="N-linked (GlcNAc...) asparagine" evidence="4">
    <location>
        <position position="552"/>
    </location>
</feature>
<feature type="glycosylation site" description="O-linked (Xyl...) (chondroitin sulfate) serine" evidence="4">
    <location>
        <position position="595"/>
    </location>
</feature>
<feature type="glycosylation site" description="N-linked (GlcNAc...) asparagine" evidence="4">
    <location>
        <position position="610"/>
    </location>
</feature>
<feature type="glycosylation site" description="O-linked (Xyl...) (chondroitin sulfate) serine; alternate" evidence="4">
    <location>
        <position position="645"/>
    </location>
</feature>
<feature type="glycosylation site" description="N-linked (GlcNAc...) asparagine" evidence="4">
    <location>
        <position position="685"/>
    </location>
</feature>
<feature type="glycosylation site" description="N-linked (GlcNAc...) asparagine" evidence="4">
    <location>
        <position position="786"/>
    </location>
</feature>
<feature type="glycosylation site" description="O-linked (Xyl...) (chondroitin sulfate) serine" evidence="4">
    <location>
        <position position="1005"/>
    </location>
</feature>
<feature type="glycosylation site" description="N-linked (GlcNAc...) asparagine" evidence="4">
    <location>
        <position position="1025"/>
    </location>
</feature>
<feature type="glycosylation site" description="N-linked (GlcNAc...) asparagine" evidence="4">
    <location>
        <position position="1058"/>
    </location>
</feature>
<feature type="glycosylation site" description="N-linked (GlcNAc...) asparagine" evidence="4">
    <location>
        <position position="1463"/>
    </location>
</feature>
<feature type="glycosylation site" description="O-linked (Xyl...) (chondroitin sulfate) serine" evidence="4">
    <location>
        <position position="1550"/>
    </location>
</feature>
<feature type="glycosylation site" description="O-linked (Xyl...) (chondroitin sulfate) serine" evidence="4">
    <location>
        <position position="1552"/>
    </location>
</feature>
<feature type="glycosylation site" description="N-linked (GlcNAc...) asparagine" evidence="4">
    <location>
        <position position="1563"/>
    </location>
</feature>
<feature type="glycosylation site" description="N-linked (GlcNAc...) asparagine" evidence="4">
    <location>
        <position position="1611"/>
    </location>
</feature>
<feature type="glycosylation site" description="N-linked (GlcNAc...) asparagine" evidence="4">
    <location>
        <position position="1619"/>
    </location>
</feature>
<feature type="disulfide bond" evidence="1">
    <location>
        <begin position="56"/>
        <end position="240"/>
    </location>
</feature>
<feature type="disulfide bond" evidence="1">
    <location>
        <begin position="133"/>
        <end position="264"/>
    </location>
</feature>
<feature type="splice variant" id="VSP_005152" description="In isoform 2." evidence="16">
    <location>
        <begin position="763"/>
        <end position="1615"/>
    </location>
</feature>
<feature type="splice variant" id="VSP_005153" description="In isoform 3." evidence="15">
    <original>E</original>
    <variation>G</variation>
    <location>
        <position position="1616"/>
    </location>
</feature>
<feature type="splice variant" id="VSP_005154" description="In isoform 3." evidence="15">
    <location>
        <begin position="1617"/>
        <end position="2316"/>
    </location>
</feature>
<feature type="turn" evidence="19">
    <location>
        <begin position="1702"/>
        <end position="1704"/>
    </location>
</feature>
<feature type="helix" evidence="19">
    <location>
        <begin position="1705"/>
        <end position="1714"/>
    </location>
</feature>
<feature type="helix" evidence="19">
    <location>
        <begin position="1717"/>
        <end position="1725"/>
    </location>
</feature>
<feature type="helix" evidence="19">
    <location>
        <begin position="1745"/>
        <end position="1747"/>
    </location>
</feature>
<feature type="strand" evidence="19">
    <location>
        <begin position="1756"/>
        <end position="1759"/>
    </location>
</feature>
<feature type="turn" evidence="19">
    <location>
        <begin position="1764"/>
        <end position="1766"/>
    </location>
</feature>
<feature type="strand" evidence="19">
    <location>
        <begin position="1767"/>
        <end position="1769"/>
    </location>
</feature>
<feature type="strand" evidence="19">
    <location>
        <begin position="1783"/>
        <end position="1791"/>
    </location>
</feature>
<feature type="strand" evidence="19">
    <location>
        <begin position="1794"/>
        <end position="1801"/>
    </location>
</feature>
<feature type="helix" evidence="19">
    <location>
        <begin position="1809"/>
        <end position="1818"/>
    </location>
</feature>
<feature type="strand" evidence="19">
    <location>
        <begin position="1823"/>
        <end position="1826"/>
    </location>
</feature>
<feature type="strand" evidence="19">
    <location>
        <begin position="1830"/>
        <end position="1832"/>
    </location>
</feature>
<feature type="strand" evidence="19">
    <location>
        <begin position="1844"/>
        <end position="1850"/>
    </location>
</feature>
<feature type="strand" evidence="19">
    <location>
        <begin position="1853"/>
        <end position="1862"/>
    </location>
</feature>
<feature type="strand" evidence="19">
    <location>
        <begin position="1864"/>
        <end position="1876"/>
    </location>
</feature>
<feature type="strand" evidence="19">
    <location>
        <begin position="1890"/>
        <end position="1897"/>
    </location>
</feature>
<feature type="strand" evidence="19">
    <location>
        <begin position="1902"/>
        <end position="1904"/>
    </location>
</feature>
<feature type="helix" evidence="19">
    <location>
        <begin position="1910"/>
        <end position="1923"/>
    </location>
</feature>
<feature type="strand" evidence="19">
    <location>
        <begin position="1930"/>
        <end position="1933"/>
    </location>
</feature>
<feature type="strand" evidence="19">
    <location>
        <begin position="1935"/>
        <end position="1938"/>
    </location>
</feature>
<feature type="helix" evidence="19">
    <location>
        <begin position="1939"/>
        <end position="1956"/>
    </location>
</feature>
<feature type="strand" evidence="19">
    <location>
        <begin position="1958"/>
        <end position="1960"/>
    </location>
</feature>
<feature type="helix" evidence="19">
    <location>
        <begin position="1962"/>
        <end position="1972"/>
    </location>
</feature>
<feature type="helix" evidence="19">
    <location>
        <begin position="1980"/>
        <end position="1996"/>
    </location>
</feature>
<feature type="strand" evidence="19">
    <location>
        <begin position="2001"/>
        <end position="2003"/>
    </location>
</feature>
<feature type="helix" evidence="19">
    <location>
        <begin position="2006"/>
        <end position="2012"/>
    </location>
</feature>
<feature type="helix" evidence="19">
    <location>
        <begin position="2023"/>
        <end position="2031"/>
    </location>
</feature>
<feature type="helix" evidence="19">
    <location>
        <begin position="2050"/>
        <end position="2052"/>
    </location>
</feature>
<feature type="turn" evidence="19">
    <location>
        <begin position="2062"/>
        <end position="2064"/>
    </location>
</feature>
<feature type="strand" evidence="19">
    <location>
        <begin position="2065"/>
        <end position="2067"/>
    </location>
</feature>
<feature type="strand" evidence="19">
    <location>
        <begin position="2078"/>
        <end position="2084"/>
    </location>
</feature>
<feature type="strand" evidence="19">
    <location>
        <begin position="2092"/>
        <end position="2096"/>
    </location>
</feature>
<feature type="turn" evidence="19">
    <location>
        <begin position="2101"/>
        <end position="2103"/>
    </location>
</feature>
<feature type="helix" evidence="19">
    <location>
        <begin position="2104"/>
        <end position="2114"/>
    </location>
</feature>
<feature type="strand" evidence="19">
    <location>
        <begin position="2118"/>
        <end position="2121"/>
    </location>
</feature>
<feature type="strand" evidence="19">
    <location>
        <begin position="2143"/>
        <end position="2145"/>
    </location>
</feature>
<feature type="strand" evidence="19">
    <location>
        <begin position="2148"/>
        <end position="2152"/>
    </location>
</feature>
<feature type="strand" evidence="19">
    <location>
        <begin position="2156"/>
        <end position="2159"/>
    </location>
</feature>
<feature type="strand" evidence="19">
    <location>
        <begin position="2165"/>
        <end position="2179"/>
    </location>
</feature>
<feature type="strand" evidence="19">
    <location>
        <begin position="2181"/>
        <end position="2188"/>
    </location>
</feature>
<feature type="strand" evidence="19">
    <location>
        <begin position="2191"/>
        <end position="2193"/>
    </location>
</feature>
<feature type="strand" evidence="19">
    <location>
        <begin position="2195"/>
        <end position="2197"/>
    </location>
</feature>
<feature type="helix" evidence="19">
    <location>
        <begin position="2199"/>
        <end position="2201"/>
    </location>
</feature>
<feature type="helix" evidence="19">
    <location>
        <begin position="2202"/>
        <end position="2215"/>
    </location>
</feature>
<feature type="strand" evidence="19">
    <location>
        <begin position="2220"/>
        <end position="2223"/>
    </location>
</feature>
<feature type="strand" evidence="19">
    <location>
        <begin position="2225"/>
        <end position="2228"/>
    </location>
</feature>
<feature type="helix" evidence="19">
    <location>
        <begin position="2229"/>
        <end position="2247"/>
    </location>
</feature>
<feature type="strand" evidence="19">
    <location>
        <begin position="2248"/>
        <end position="2250"/>
    </location>
</feature>
<feature type="helix" evidence="19">
    <location>
        <begin position="2252"/>
        <end position="2262"/>
    </location>
</feature>
<feature type="helix" evidence="19">
    <location>
        <begin position="2270"/>
        <end position="2283"/>
    </location>
</feature>
<organism>
    <name type="scientific">Rattus norvegicus</name>
    <name type="common">Rat</name>
    <dbReference type="NCBI Taxonomy" id="10116"/>
    <lineage>
        <taxon>Eukaryota</taxon>
        <taxon>Metazoa</taxon>
        <taxon>Chordata</taxon>
        <taxon>Craniata</taxon>
        <taxon>Vertebrata</taxon>
        <taxon>Euteleostomi</taxon>
        <taxon>Mammalia</taxon>
        <taxon>Eutheria</taxon>
        <taxon>Euarchontoglires</taxon>
        <taxon>Glires</taxon>
        <taxon>Rodentia</taxon>
        <taxon>Myomorpha</taxon>
        <taxon>Muroidea</taxon>
        <taxon>Muridae</taxon>
        <taxon>Murinae</taxon>
        <taxon>Rattus</taxon>
    </lineage>
</organism>
<comment type="function">
    <text evidence="1">Protein tyrosine phosphatase that negatively regulates oligodendrocyte precursor proliferation in the embryonic spinal cord. Required for normal differentiation of the precursor cells into mature, fully myelinating oligodendrocytes. May play a role in protecting oligondendrocytes against apoptosis. May play a role in the establishment of contextual memory, probably via the dephosphorylation of proteins that are part of important signaling cascades (By similarity).</text>
</comment>
<comment type="function">
    <text>Isoform 3 (phosphacan), previously designated 3F8 chondroitin sulfate proteoglycan or 3H1 keratan sulfate proteoglycan depending on the glycosylation status, is a soluble nervous tissue-specific proteoglycan. It is synthesized by glia and binds to neurons and to the neural cell adhesion molecules tenascin, N-CAM or NG-CAM but not to laminin and fibronectin. Phosphacan acts as a potent inhibitor of cell adhesion and neurite outgrowth.</text>
</comment>
<comment type="catalytic activity">
    <reaction evidence="8 11">
        <text>O-phospho-L-tyrosyl-[protein] + H2O = L-tyrosyl-[protein] + phosphate</text>
        <dbReference type="Rhea" id="RHEA:10684"/>
        <dbReference type="Rhea" id="RHEA-COMP:10136"/>
        <dbReference type="Rhea" id="RHEA-COMP:20101"/>
        <dbReference type="ChEBI" id="CHEBI:15377"/>
        <dbReference type="ChEBI" id="CHEBI:43474"/>
        <dbReference type="ChEBI" id="CHEBI:46858"/>
        <dbReference type="ChEBI" id="CHEBI:61978"/>
        <dbReference type="EC" id="3.1.3.48"/>
    </reaction>
</comment>
<comment type="subunit">
    <text evidence="10 11 12 13 14">Interacts with tenascin (PubMed:7512960). Interacts with N-CAM and NG-CAM (PubMed:7528221). The carbonic-anhydrase like domain interacts with CNTN1 (contactin) (PubMed:7628014). Interacts with PTN (PubMed:16814777). Interaction with PTN promotes formation of homooligomers; oligomerization impairs phosphatase activity (PubMed:16814777). Interacts (via chondroitin sulfate chains) with MDK (via C-terminal); this interaction is inhibited by PTN; this interaction promotes neuronal migration (PubMed:10212223).</text>
</comment>
<comment type="subcellular location">
    <molecule>Isoform 1</molecule>
    <subcellularLocation>
        <location evidence="11">Cell membrane</location>
        <topology evidence="11">Single-pass type I membrane protein</topology>
    </subcellularLocation>
    <subcellularLocation>
        <location evidence="1">Secreted</location>
    </subcellularLocation>
    <text evidence="1">A secreted form is apparently generated by shedding of the extracellular domain.</text>
</comment>
<comment type="subcellular location">
    <molecule>Isoform 2</molecule>
    <subcellularLocation>
        <location evidence="17">Secreted</location>
    </subcellularLocation>
</comment>
<comment type="subcellular location">
    <molecule>Isoform 3</molecule>
    <subcellularLocation>
        <location>Secreted</location>
    </subcellularLocation>
</comment>
<comment type="alternative products">
    <event type="alternative splicing"/>
    <isoform>
        <id>Q62656-1</id>
        <name>1</name>
        <name>Long</name>
        <sequence type="displayed"/>
    </isoform>
    <isoform>
        <id>Q62656-2</id>
        <name>2</name>
        <name>Short</name>
        <sequence type="described" ref="VSP_005152"/>
    </isoform>
    <isoform>
        <id>Q62656-3</id>
        <name>3</name>
        <name>Phosphacan</name>
        <sequence type="described" ref="VSP_005153 VSP_005154"/>
    </isoform>
</comment>
<comment type="tissue specificity">
    <text>Nervous tissue specific.</text>
</comment>
<comment type="similarity">
    <text evidence="17">Belongs to the protein-tyrosine phosphatase family. Receptor class 5 subfamily.</text>
</comment>
<name>PTPRZ_RAT</name>
<evidence type="ECO:0000250" key="1"/>
<evidence type="ECO:0000250" key="2">
    <source>
        <dbReference type="UniProtKB" id="B9EKR1"/>
    </source>
</evidence>
<evidence type="ECO:0000250" key="3">
    <source>
        <dbReference type="UniProtKB" id="P23471"/>
    </source>
</evidence>
<evidence type="ECO:0000255" key="4"/>
<evidence type="ECO:0000255" key="5">
    <source>
        <dbReference type="PROSITE-ProRule" id="PRU00160"/>
    </source>
</evidence>
<evidence type="ECO:0000255" key="6">
    <source>
        <dbReference type="PROSITE-ProRule" id="PRU00316"/>
    </source>
</evidence>
<evidence type="ECO:0000255" key="7">
    <source>
        <dbReference type="PROSITE-ProRule" id="PRU01134"/>
    </source>
</evidence>
<evidence type="ECO:0000255" key="8">
    <source>
        <dbReference type="PROSITE-ProRule" id="PRU10044"/>
    </source>
</evidence>
<evidence type="ECO:0000256" key="9">
    <source>
        <dbReference type="SAM" id="MobiDB-lite"/>
    </source>
</evidence>
<evidence type="ECO:0000269" key="10">
    <source>
    </source>
</evidence>
<evidence type="ECO:0000269" key="11">
    <source>
    </source>
</evidence>
<evidence type="ECO:0000269" key="12">
    <source>
    </source>
</evidence>
<evidence type="ECO:0000269" key="13">
    <source>
    </source>
</evidence>
<evidence type="ECO:0000269" key="14">
    <source>
    </source>
</evidence>
<evidence type="ECO:0000303" key="15">
    <source>
    </source>
</evidence>
<evidence type="ECO:0000303" key="16">
    <source>
    </source>
</evidence>
<evidence type="ECO:0000305" key="17"/>
<evidence type="ECO:0007744" key="18">
    <source>
    </source>
</evidence>
<evidence type="ECO:0007829" key="19">
    <source>
        <dbReference type="PDB" id="6J6U"/>
    </source>
</evidence>